<geneLocation type="chloroplast"/>
<organism>
    <name type="scientific">Wollastonia biflora</name>
    <name type="common">Beach sunflower</name>
    <name type="synonym">Wedelia biflora</name>
    <dbReference type="NCBI Taxonomy" id="101473"/>
    <lineage>
        <taxon>Eukaryota</taxon>
        <taxon>Viridiplantae</taxon>
        <taxon>Streptophyta</taxon>
        <taxon>Embryophyta</taxon>
        <taxon>Tracheophyta</taxon>
        <taxon>Spermatophyta</taxon>
        <taxon>Magnoliopsida</taxon>
        <taxon>eudicotyledons</taxon>
        <taxon>Gunneridae</taxon>
        <taxon>Pentapetalae</taxon>
        <taxon>asterids</taxon>
        <taxon>campanulids</taxon>
        <taxon>Asterales</taxon>
        <taxon>Asteraceae</taxon>
        <taxon>Asteroideae</taxon>
        <taxon>Heliantheae alliance</taxon>
        <taxon>Heliantheae</taxon>
        <taxon>Wollastonia</taxon>
    </lineage>
</organism>
<protein>
    <recommendedName>
        <fullName evidence="1">Maturase K</fullName>
    </recommendedName>
    <alternativeName>
        <fullName evidence="1">Intron maturase</fullName>
    </alternativeName>
</protein>
<evidence type="ECO:0000255" key="1">
    <source>
        <dbReference type="HAMAP-Rule" id="MF_01390"/>
    </source>
</evidence>
<feature type="chain" id="PRO_0000143793" description="Maturase K">
    <location>
        <begin position="1"/>
        <end position="504"/>
    </location>
</feature>
<keyword id="KW-0150">Chloroplast</keyword>
<keyword id="KW-0507">mRNA processing</keyword>
<keyword id="KW-0934">Plastid</keyword>
<keyword id="KW-0694">RNA-binding</keyword>
<keyword id="KW-0819">tRNA processing</keyword>
<gene>
    <name evidence="1" type="primary">matK</name>
</gene>
<sequence length="504" mass="59097">MEKFQSYLGLDRSHYFLYPLIFQEYIYVLAHDHGLNGSILLENAGYDNKSSLLIVKRLIIRMYQQNHLILSVNDSKQTPFWGHNKNFYSQVMSEVSSTIMEIPLSLRLISSLERKGVVKSDNLRSIHSIFSFLEDNFSHLNYVLDILIPYPAHLEILVQALRYWIKDASSLHLLRFFLYECHNRDSLITSNSKKACSSFSKRNHRLFCFLYTSYLCEYESGFLFLRNQSSHLRSTSSGALIERIYFYGKIEHLAEVFAGAFQANFWLFKDSFMHYVRYQGKSILASKGTFLLMNKWKYYFVNFWKSSFYLWSHPGGIYINQLSNHSLDFLGYRSSVRLKPSMVRGQMLENTFLIDNAIKKFDSLVPIMPLVGSLAKSKFCNALGHPIGKAIWTDLSDSDIIERFGRIYRKLSHYHSGSSKKKGLYRVKYILRLSCARTLARKHKSTVRAFLKRFGSQLLEEFFTEEEQVFPLTFPRVSSISRRLSRRRIWYLDIVCINDLVNHE</sequence>
<proteinExistence type="inferred from homology"/>
<dbReference type="EMBL" id="AY297653">
    <property type="protein sequence ID" value="AAR14780.1"/>
    <property type="molecule type" value="Genomic_DNA"/>
</dbReference>
<dbReference type="GO" id="GO:0009507">
    <property type="term" value="C:chloroplast"/>
    <property type="evidence" value="ECO:0007669"/>
    <property type="project" value="UniProtKB-SubCell"/>
</dbReference>
<dbReference type="GO" id="GO:0003723">
    <property type="term" value="F:RNA binding"/>
    <property type="evidence" value="ECO:0007669"/>
    <property type="project" value="UniProtKB-KW"/>
</dbReference>
<dbReference type="GO" id="GO:0006397">
    <property type="term" value="P:mRNA processing"/>
    <property type="evidence" value="ECO:0007669"/>
    <property type="project" value="UniProtKB-KW"/>
</dbReference>
<dbReference type="GO" id="GO:0008380">
    <property type="term" value="P:RNA splicing"/>
    <property type="evidence" value="ECO:0007669"/>
    <property type="project" value="UniProtKB-UniRule"/>
</dbReference>
<dbReference type="GO" id="GO:0008033">
    <property type="term" value="P:tRNA processing"/>
    <property type="evidence" value="ECO:0007669"/>
    <property type="project" value="UniProtKB-KW"/>
</dbReference>
<dbReference type="HAMAP" id="MF_01390">
    <property type="entry name" value="MatK"/>
    <property type="match status" value="1"/>
</dbReference>
<dbReference type="InterPro" id="IPR024937">
    <property type="entry name" value="Domain_X"/>
</dbReference>
<dbReference type="InterPro" id="IPR002866">
    <property type="entry name" value="Maturase_MatK"/>
</dbReference>
<dbReference type="InterPro" id="IPR024942">
    <property type="entry name" value="Maturase_MatK_N"/>
</dbReference>
<dbReference type="PANTHER" id="PTHR34811">
    <property type="entry name" value="MATURASE K"/>
    <property type="match status" value="1"/>
</dbReference>
<dbReference type="PANTHER" id="PTHR34811:SF1">
    <property type="entry name" value="MATURASE K"/>
    <property type="match status" value="1"/>
</dbReference>
<dbReference type="Pfam" id="PF01348">
    <property type="entry name" value="Intron_maturas2"/>
    <property type="match status" value="1"/>
</dbReference>
<dbReference type="Pfam" id="PF01824">
    <property type="entry name" value="MatK_N"/>
    <property type="match status" value="1"/>
</dbReference>
<accession>Q6JVN2</accession>
<reference key="1">
    <citation type="submission" date="2003-05" db="EMBL/GenBank/DDBJ databases">
        <title>Phylogenetic relationships within subtribe Ecliptinae (Asteraceae: Heliantheae) based on sequence data from seven chloroplast DNA regions.</title>
        <authorList>
            <person name="Dias de Moraes M."/>
            <person name="Panero J.L."/>
            <person name="Semir J."/>
        </authorList>
    </citation>
    <scope>NUCLEOTIDE SEQUENCE [GENOMIC DNA]</scope>
</reference>
<comment type="function">
    <text evidence="1">Usually encoded in the trnK tRNA gene intron. Probably assists in splicing its own and other chloroplast group II introns.</text>
</comment>
<comment type="subcellular location">
    <subcellularLocation>
        <location>Plastid</location>
        <location>Chloroplast</location>
    </subcellularLocation>
</comment>
<comment type="similarity">
    <text evidence="1">Belongs to the intron maturase 2 family. MatK subfamily.</text>
</comment>
<name>MATK_WOLBI</name>